<feature type="chain" id="PRO_0000057619" description="Hydroxymethylglutaryl-CoA synthase">
    <location>
        <begin position="1"/>
        <end position="351"/>
    </location>
</feature>
<feature type="active site" description="Proton donor/acceptor" evidence="1">
    <location>
        <position position="80"/>
    </location>
</feature>
<feature type="active site" description="Acyl-thioester intermediate" evidence="1">
    <location>
        <position position="112"/>
    </location>
</feature>
<feature type="active site" description="Proton donor/acceptor" evidence="1">
    <location>
        <position position="234"/>
    </location>
</feature>
<feature type="binding site" evidence="1">
    <location>
        <position position="28"/>
    </location>
    <ligand>
        <name>(3S)-3-hydroxy-3-methylglutaryl-CoA</name>
        <dbReference type="ChEBI" id="CHEBI:43074"/>
    </ligand>
</feature>
<feature type="binding site" evidence="1">
    <location>
        <position position="112"/>
    </location>
    <ligand>
        <name>(3S)-3-hydroxy-3-methylglutaryl-CoA</name>
        <dbReference type="ChEBI" id="CHEBI:43074"/>
    </ligand>
</feature>
<feature type="binding site" evidence="1">
    <location>
        <position position="153"/>
    </location>
    <ligand>
        <name>(3S)-3-hydroxy-3-methylglutaryl-CoA</name>
        <dbReference type="ChEBI" id="CHEBI:43074"/>
    </ligand>
</feature>
<feature type="binding site" evidence="1">
    <location>
        <position position="199"/>
    </location>
    <ligand>
        <name>CoA</name>
        <dbReference type="ChEBI" id="CHEBI:57287"/>
        <note>ligand shared with acetoacetyl-CoA thiolase</note>
    </ligand>
</feature>
<feature type="binding site" evidence="1">
    <location>
        <position position="201"/>
    </location>
    <ligand>
        <name>(3S)-3-hydroxy-3-methylglutaryl-CoA</name>
        <dbReference type="ChEBI" id="CHEBI:43074"/>
    </ligand>
</feature>
<feature type="binding site" evidence="1">
    <location>
        <position position="234"/>
    </location>
    <ligand>
        <name>(3S)-3-hydroxy-3-methylglutaryl-CoA</name>
        <dbReference type="ChEBI" id="CHEBI:43074"/>
    </ligand>
</feature>
<feature type="binding site" evidence="1">
    <location>
        <position position="239"/>
    </location>
    <ligand>
        <name>CoA</name>
        <dbReference type="ChEBI" id="CHEBI:57287"/>
        <note>ligand shared with acetoacetyl-CoA thiolase</note>
    </ligand>
</feature>
<feature type="binding site" evidence="1">
    <location>
        <position position="243"/>
    </location>
    <ligand>
        <name>(3S)-3-hydroxy-3-methylglutaryl-CoA</name>
        <dbReference type="ChEBI" id="CHEBI:43074"/>
    </ligand>
</feature>
<feature type="binding site" evidence="1">
    <location>
        <position position="266"/>
    </location>
    <ligand>
        <name>(3S)-3-hydroxy-3-methylglutaryl-CoA</name>
        <dbReference type="ChEBI" id="CHEBI:43074"/>
    </ligand>
</feature>
<feature type="binding site" evidence="1">
    <location>
        <position position="296"/>
    </location>
    <ligand>
        <name>(3S)-3-hydroxy-3-methylglutaryl-CoA</name>
        <dbReference type="ChEBI" id="CHEBI:43074"/>
    </ligand>
</feature>
<comment type="function">
    <text evidence="1">Catalyzes the condensation of acetyl-CoA with acetoacetyl-CoA to form 3-hydroxy-3-methylglutaryl-CoA (HMG-CoA). Functions in the mevalonate (MVA) pathway leading to isopentenyl diphosphate (IPP), a key precursor for the biosynthesis of isoprenoid compounds that are building blocks of archaeal membrane lipids.</text>
</comment>
<comment type="catalytic activity">
    <reaction evidence="1">
        <text>acetoacetyl-CoA + acetyl-CoA + H2O = (3S)-3-hydroxy-3-methylglutaryl-CoA + CoA + H(+)</text>
        <dbReference type="Rhea" id="RHEA:10188"/>
        <dbReference type="ChEBI" id="CHEBI:15377"/>
        <dbReference type="ChEBI" id="CHEBI:15378"/>
        <dbReference type="ChEBI" id="CHEBI:43074"/>
        <dbReference type="ChEBI" id="CHEBI:57286"/>
        <dbReference type="ChEBI" id="CHEBI:57287"/>
        <dbReference type="ChEBI" id="CHEBI:57288"/>
        <dbReference type="EC" id="2.3.3.10"/>
    </reaction>
    <physiologicalReaction direction="left-to-right" evidence="1">
        <dbReference type="Rhea" id="RHEA:10189"/>
    </physiologicalReaction>
</comment>
<comment type="pathway">
    <text evidence="1">Metabolic intermediate biosynthesis; (R)-mevalonate biosynthesis; (R)-mevalonate from acetyl-CoA: step 2/3.</text>
</comment>
<comment type="subunit">
    <text evidence="1">Interacts with acetoacetyl-CoA thiolase that catalyzes the precedent step in the pathway and with a DUF35 protein. The acetoacetyl-CoA thiolase/HMG-CoA synthase complex channels the intermediate via a fused CoA-binding site, which allows for efficient coupling of the endergonic thiolase reaction with the exergonic HMGCS reaction.</text>
</comment>
<comment type="similarity">
    <text evidence="1">Belongs to the thiolase-like superfamily. Archaeal HMG-CoA synthase family.</text>
</comment>
<proteinExistence type="inferred from homology"/>
<keyword id="KW-0012">Acyltransferase</keyword>
<keyword id="KW-0414">Isoprene biosynthesis</keyword>
<keyword id="KW-0808">Transferase</keyword>
<sequence length="351" mass="38389">MSGIVTYGSYIPRYRIRPEEIARVWGEDPEKMKNGIFILSKSVPGPDEDVATISVEAARNALKRSNIDPNDIGAIYIGSESHPYAVKPTATIVAAAIGMPFRTFAADYEFACKAGTAAMQNIKAMVDSNMIKYGMAIGSDTSQGAPGDALEYTASAGGTAMVIGRDNVIAEINKTISVATDTPDFWRREGEPYPKHGERFTGEPGYFKHVIGAARDIMSELNTKPDDYDYVVFHQPNGKFPTRAAKILGFREEQYREGLITPYIGNTYSGSTMTGLSAILDVSRPGDRILAVSFGSGAGSDAFDITVTDNILDYHRENAPGVRKMMESTEYIDYAVYSKFRKILVFGDNLE</sequence>
<protein>
    <recommendedName>
        <fullName evidence="1">Hydroxymethylglutaryl-CoA synthase</fullName>
        <shortName evidence="1">HMG-CoA synthase</shortName>
        <shortName evidence="1">HMGCS</shortName>
        <ecNumber evidence="1">2.3.3.10</ecNumber>
    </recommendedName>
</protein>
<organism>
    <name type="scientific">Picrophilus torridus (strain ATCC 700027 / DSM 9790 / JCM 10055 / NBRC 100828 / KAW 2/3)</name>
    <dbReference type="NCBI Taxonomy" id="1122961"/>
    <lineage>
        <taxon>Archaea</taxon>
        <taxon>Methanobacteriati</taxon>
        <taxon>Thermoplasmatota</taxon>
        <taxon>Thermoplasmata</taxon>
        <taxon>Thermoplasmatales</taxon>
        <taxon>Picrophilaceae</taxon>
        <taxon>Picrophilus</taxon>
    </lineage>
</organism>
<reference key="1">
    <citation type="journal article" date="2004" name="Proc. Natl. Acad. Sci. U.S.A.">
        <title>Genome sequence of Picrophilus torridus and its implications for life around pH 0.</title>
        <authorList>
            <person name="Fuetterer O."/>
            <person name="Angelov A."/>
            <person name="Liesegang H."/>
            <person name="Gottschalk G."/>
            <person name="Schleper C."/>
            <person name="Schepers B."/>
            <person name="Dock C."/>
            <person name="Antranikian G."/>
            <person name="Liebl W."/>
        </authorList>
    </citation>
    <scope>NUCLEOTIDE SEQUENCE [LARGE SCALE GENOMIC DNA]</scope>
    <source>
        <strain>ATCC 700027 / DSM 9790 / JCM 10055 / NBRC 100828 / KAW 2/3</strain>
    </source>
</reference>
<accession>Q6L233</accession>
<evidence type="ECO:0000255" key="1">
    <source>
        <dbReference type="HAMAP-Rule" id="MF_01409"/>
    </source>
</evidence>
<dbReference type="EC" id="2.3.3.10" evidence="1"/>
<dbReference type="EMBL" id="AE017261">
    <property type="protein sequence ID" value="AAT42969.1"/>
    <property type="molecule type" value="Genomic_DNA"/>
</dbReference>
<dbReference type="RefSeq" id="WP_011177185.1">
    <property type="nucleotide sequence ID" value="NC_005877.1"/>
</dbReference>
<dbReference type="SMR" id="Q6L233"/>
<dbReference type="FunCoup" id="Q6L233">
    <property type="interactions" value="94"/>
</dbReference>
<dbReference type="STRING" id="263820.PTO0384"/>
<dbReference type="PaxDb" id="263820-PTO0384"/>
<dbReference type="GeneID" id="2844830"/>
<dbReference type="KEGG" id="pto:PTO0384"/>
<dbReference type="PATRIC" id="fig|263820.9.peg.408"/>
<dbReference type="eggNOG" id="arCOG01767">
    <property type="taxonomic scope" value="Archaea"/>
</dbReference>
<dbReference type="HOGENOM" id="CLU_039592_7_0_2"/>
<dbReference type="InParanoid" id="Q6L233"/>
<dbReference type="OrthoDB" id="5812at2157"/>
<dbReference type="UniPathway" id="UPA00058">
    <property type="reaction ID" value="UER00102"/>
</dbReference>
<dbReference type="Proteomes" id="UP000000438">
    <property type="component" value="Chromosome"/>
</dbReference>
<dbReference type="GO" id="GO:0003985">
    <property type="term" value="F:acetyl-CoA C-acetyltransferase activity"/>
    <property type="evidence" value="ECO:0007669"/>
    <property type="project" value="UniProtKB-UniRule"/>
</dbReference>
<dbReference type="GO" id="GO:0004421">
    <property type="term" value="F:hydroxymethylglutaryl-CoA synthase activity"/>
    <property type="evidence" value="ECO:0007669"/>
    <property type="project" value="InterPro"/>
</dbReference>
<dbReference type="GO" id="GO:0010142">
    <property type="term" value="P:farnesyl diphosphate biosynthetic process, mevalonate pathway"/>
    <property type="evidence" value="ECO:0007669"/>
    <property type="project" value="TreeGrafter"/>
</dbReference>
<dbReference type="GO" id="GO:0019287">
    <property type="term" value="P:isopentenyl diphosphate biosynthetic process, mevalonate pathway"/>
    <property type="evidence" value="ECO:0007669"/>
    <property type="project" value="UniProtKB-UniRule"/>
</dbReference>
<dbReference type="CDD" id="cd00827">
    <property type="entry name" value="init_cond_enzymes"/>
    <property type="match status" value="1"/>
</dbReference>
<dbReference type="Gene3D" id="3.40.47.10">
    <property type="match status" value="1"/>
</dbReference>
<dbReference type="HAMAP" id="MF_01409">
    <property type="entry name" value="HMG_CoA_synth_arch"/>
    <property type="match status" value="1"/>
</dbReference>
<dbReference type="InterPro" id="IPR013747">
    <property type="entry name" value="ACP_syn_III_C"/>
</dbReference>
<dbReference type="InterPro" id="IPR004656">
    <property type="entry name" value="HMG_CoA_Synthase"/>
</dbReference>
<dbReference type="InterPro" id="IPR016039">
    <property type="entry name" value="Thiolase-like"/>
</dbReference>
<dbReference type="NCBIfam" id="TIGR00748">
    <property type="entry name" value="HMG_CoA_syn_Arc"/>
    <property type="match status" value="1"/>
</dbReference>
<dbReference type="NCBIfam" id="NF003274">
    <property type="entry name" value="PRK04262.1"/>
    <property type="match status" value="1"/>
</dbReference>
<dbReference type="PANTHER" id="PTHR43323">
    <property type="entry name" value="3-HYDROXY-3-METHYLGLUTARYL COENZYME A SYNTHASE"/>
    <property type="match status" value="1"/>
</dbReference>
<dbReference type="PANTHER" id="PTHR43323:SF2">
    <property type="entry name" value="HYDROXYMETHYLGLUTARYL-COA SYNTHASE"/>
    <property type="match status" value="1"/>
</dbReference>
<dbReference type="Pfam" id="PF08541">
    <property type="entry name" value="ACP_syn_III_C"/>
    <property type="match status" value="1"/>
</dbReference>
<dbReference type="SUPFAM" id="SSF53901">
    <property type="entry name" value="Thiolase-like"/>
    <property type="match status" value="2"/>
</dbReference>
<gene>
    <name type="ordered locus">PTO0384</name>
</gene>
<name>HMGCS_PICTO</name>